<comment type="function">
    <text evidence="1">Binds together with bS18 to 16S ribosomal RNA.</text>
</comment>
<comment type="similarity">
    <text evidence="1">Belongs to the bacterial ribosomal protein bS6 family.</text>
</comment>
<keyword id="KW-0687">Ribonucleoprotein</keyword>
<keyword id="KW-0689">Ribosomal protein</keyword>
<keyword id="KW-0694">RNA-binding</keyword>
<keyword id="KW-0699">rRNA-binding</keyword>
<dbReference type="EMBL" id="CP000720">
    <property type="protein sequence ID" value="ABS49183.1"/>
    <property type="molecule type" value="Genomic_DNA"/>
</dbReference>
<dbReference type="RefSeq" id="WP_002210153.1">
    <property type="nucleotide sequence ID" value="NC_009708.1"/>
</dbReference>
<dbReference type="SMR" id="A7FMW5"/>
<dbReference type="GeneID" id="97457911"/>
<dbReference type="KEGG" id="ypi:YpsIP31758_3639"/>
<dbReference type="HOGENOM" id="CLU_113441_6_1_6"/>
<dbReference type="Proteomes" id="UP000002412">
    <property type="component" value="Chromosome"/>
</dbReference>
<dbReference type="GO" id="GO:0022627">
    <property type="term" value="C:cytosolic small ribosomal subunit"/>
    <property type="evidence" value="ECO:0007669"/>
    <property type="project" value="TreeGrafter"/>
</dbReference>
<dbReference type="GO" id="GO:0070181">
    <property type="term" value="F:small ribosomal subunit rRNA binding"/>
    <property type="evidence" value="ECO:0007669"/>
    <property type="project" value="TreeGrafter"/>
</dbReference>
<dbReference type="GO" id="GO:0003735">
    <property type="term" value="F:structural constituent of ribosome"/>
    <property type="evidence" value="ECO:0007669"/>
    <property type="project" value="InterPro"/>
</dbReference>
<dbReference type="GO" id="GO:0006412">
    <property type="term" value="P:translation"/>
    <property type="evidence" value="ECO:0007669"/>
    <property type="project" value="UniProtKB-UniRule"/>
</dbReference>
<dbReference type="CDD" id="cd00473">
    <property type="entry name" value="bS6"/>
    <property type="match status" value="1"/>
</dbReference>
<dbReference type="FunFam" id="3.30.70.60:FF:000003">
    <property type="entry name" value="30S ribosomal protein S6"/>
    <property type="match status" value="1"/>
</dbReference>
<dbReference type="Gene3D" id="3.30.70.60">
    <property type="match status" value="1"/>
</dbReference>
<dbReference type="HAMAP" id="MF_00360">
    <property type="entry name" value="Ribosomal_bS6"/>
    <property type="match status" value="1"/>
</dbReference>
<dbReference type="InterPro" id="IPR000529">
    <property type="entry name" value="Ribosomal_bS6"/>
</dbReference>
<dbReference type="InterPro" id="IPR020815">
    <property type="entry name" value="Ribosomal_bS6_CS"/>
</dbReference>
<dbReference type="InterPro" id="IPR035980">
    <property type="entry name" value="Ribosomal_bS6_sf"/>
</dbReference>
<dbReference type="InterPro" id="IPR020814">
    <property type="entry name" value="Ribosomal_S6_plastid/chlpt"/>
</dbReference>
<dbReference type="InterPro" id="IPR014717">
    <property type="entry name" value="Transl_elong_EF1B/ribsomal_bS6"/>
</dbReference>
<dbReference type="NCBIfam" id="TIGR00166">
    <property type="entry name" value="S6"/>
    <property type="match status" value="1"/>
</dbReference>
<dbReference type="PANTHER" id="PTHR21011">
    <property type="entry name" value="MITOCHONDRIAL 28S RIBOSOMAL PROTEIN S6"/>
    <property type="match status" value="1"/>
</dbReference>
<dbReference type="PANTHER" id="PTHR21011:SF1">
    <property type="entry name" value="SMALL RIBOSOMAL SUBUNIT PROTEIN BS6M"/>
    <property type="match status" value="1"/>
</dbReference>
<dbReference type="Pfam" id="PF01250">
    <property type="entry name" value="Ribosomal_S6"/>
    <property type="match status" value="1"/>
</dbReference>
<dbReference type="SUPFAM" id="SSF54995">
    <property type="entry name" value="Ribosomal protein S6"/>
    <property type="match status" value="1"/>
</dbReference>
<dbReference type="PROSITE" id="PS01048">
    <property type="entry name" value="RIBOSOMAL_S6"/>
    <property type="match status" value="1"/>
</dbReference>
<accession>A7FMW5</accession>
<protein>
    <recommendedName>
        <fullName evidence="1">Small ribosomal subunit protein bS6</fullName>
    </recommendedName>
    <alternativeName>
        <fullName evidence="3">30S ribosomal protein S6</fullName>
    </alternativeName>
</protein>
<evidence type="ECO:0000255" key="1">
    <source>
        <dbReference type="HAMAP-Rule" id="MF_00360"/>
    </source>
</evidence>
<evidence type="ECO:0000256" key="2">
    <source>
        <dbReference type="SAM" id="MobiDB-lite"/>
    </source>
</evidence>
<evidence type="ECO:0000305" key="3"/>
<feature type="chain" id="PRO_1000059863" description="Small ribosomal subunit protein bS6">
    <location>
        <begin position="1"/>
        <end position="130"/>
    </location>
</feature>
<feature type="region of interest" description="Disordered" evidence="2">
    <location>
        <begin position="99"/>
        <end position="130"/>
    </location>
</feature>
<feature type="compositionally biased region" description="Basic and acidic residues" evidence="2">
    <location>
        <begin position="104"/>
        <end position="116"/>
    </location>
</feature>
<feature type="compositionally biased region" description="Acidic residues" evidence="2">
    <location>
        <begin position="119"/>
        <end position="130"/>
    </location>
</feature>
<name>RS6_YERP3</name>
<sequence>MRHYEIVFMVHPDQSEQVPGMIERYSATITNAAGTIHRLEDWGRRQLAYPINKLHKAHYVLLNVEAPQEAIDELETNFRFNDAVIRSMVMRVKHAVTEASPMVKAKDERRERHDFASEANDDSEAGDSEE</sequence>
<organism>
    <name type="scientific">Yersinia pseudotuberculosis serotype O:1b (strain IP 31758)</name>
    <dbReference type="NCBI Taxonomy" id="349747"/>
    <lineage>
        <taxon>Bacteria</taxon>
        <taxon>Pseudomonadati</taxon>
        <taxon>Pseudomonadota</taxon>
        <taxon>Gammaproteobacteria</taxon>
        <taxon>Enterobacterales</taxon>
        <taxon>Yersiniaceae</taxon>
        <taxon>Yersinia</taxon>
    </lineage>
</organism>
<reference key="1">
    <citation type="journal article" date="2007" name="PLoS Genet.">
        <title>The complete genome sequence of Yersinia pseudotuberculosis IP31758, the causative agent of Far East scarlet-like fever.</title>
        <authorList>
            <person name="Eppinger M."/>
            <person name="Rosovitz M.J."/>
            <person name="Fricke W.F."/>
            <person name="Rasko D.A."/>
            <person name="Kokorina G."/>
            <person name="Fayolle C."/>
            <person name="Lindler L.E."/>
            <person name="Carniel E."/>
            <person name="Ravel J."/>
        </authorList>
    </citation>
    <scope>NUCLEOTIDE SEQUENCE [LARGE SCALE GENOMIC DNA]</scope>
    <source>
        <strain>IP 31758</strain>
    </source>
</reference>
<gene>
    <name evidence="1" type="primary">rpsF</name>
    <name type="ordered locus">YpsIP31758_3639</name>
</gene>
<proteinExistence type="inferred from homology"/>